<protein>
    <recommendedName>
        <fullName evidence="1">S-adenosylmethionine synthase</fullName>
        <shortName evidence="1">AdoMet synthase</shortName>
        <ecNumber evidence="1">2.5.1.6</ecNumber>
    </recommendedName>
    <alternativeName>
        <fullName evidence="1">MAT</fullName>
    </alternativeName>
    <alternativeName>
        <fullName evidence="1">Methionine adenosyltransferase</fullName>
    </alternativeName>
</protein>
<keyword id="KW-0067">ATP-binding</keyword>
<keyword id="KW-0963">Cytoplasm</keyword>
<keyword id="KW-0460">Magnesium</keyword>
<keyword id="KW-0479">Metal-binding</keyword>
<keyword id="KW-0547">Nucleotide-binding</keyword>
<keyword id="KW-0554">One-carbon metabolism</keyword>
<keyword id="KW-0630">Potassium</keyword>
<keyword id="KW-1185">Reference proteome</keyword>
<keyword id="KW-0808">Transferase</keyword>
<comment type="function">
    <text evidence="1">Catalyzes the formation of S-adenosylmethionine (AdoMet) from methionine and ATP. The overall synthetic reaction is composed of two sequential steps, AdoMet formation and the subsequent tripolyphosphate hydrolysis which occurs prior to release of AdoMet from the enzyme.</text>
</comment>
<comment type="catalytic activity">
    <reaction evidence="1">
        <text>L-methionine + ATP + H2O = S-adenosyl-L-methionine + phosphate + diphosphate</text>
        <dbReference type="Rhea" id="RHEA:21080"/>
        <dbReference type="ChEBI" id="CHEBI:15377"/>
        <dbReference type="ChEBI" id="CHEBI:30616"/>
        <dbReference type="ChEBI" id="CHEBI:33019"/>
        <dbReference type="ChEBI" id="CHEBI:43474"/>
        <dbReference type="ChEBI" id="CHEBI:57844"/>
        <dbReference type="ChEBI" id="CHEBI:59789"/>
        <dbReference type="EC" id="2.5.1.6"/>
    </reaction>
</comment>
<comment type="cofactor">
    <cofactor evidence="1">
        <name>Mg(2+)</name>
        <dbReference type="ChEBI" id="CHEBI:18420"/>
    </cofactor>
    <text evidence="1">Binds 2 divalent ions per subunit.</text>
</comment>
<comment type="cofactor">
    <cofactor evidence="1">
        <name>K(+)</name>
        <dbReference type="ChEBI" id="CHEBI:29103"/>
    </cofactor>
    <text evidence="1">Binds 1 potassium ion per subunit.</text>
</comment>
<comment type="pathway">
    <text evidence="1">Amino-acid biosynthesis; S-adenosyl-L-methionine biosynthesis; S-adenosyl-L-methionine from L-methionine: step 1/1.</text>
</comment>
<comment type="subunit">
    <text evidence="1">Homotetramer; dimer of dimers.</text>
</comment>
<comment type="subcellular location">
    <subcellularLocation>
        <location evidence="1">Cytoplasm</location>
    </subcellularLocation>
</comment>
<comment type="similarity">
    <text evidence="1">Belongs to the AdoMet synthase family.</text>
</comment>
<accession>A1A0T9</accession>
<reference key="1">
    <citation type="submission" date="2006-12" db="EMBL/GenBank/DDBJ databases">
        <title>Bifidobacterium adolescentis complete genome sequence.</title>
        <authorList>
            <person name="Suzuki T."/>
            <person name="Tsuda Y."/>
            <person name="Kanou N."/>
            <person name="Inoue T."/>
            <person name="Kumazaki K."/>
            <person name="Nagano S."/>
            <person name="Hirai S."/>
            <person name="Tanaka K."/>
            <person name="Watanabe K."/>
        </authorList>
    </citation>
    <scope>NUCLEOTIDE SEQUENCE [LARGE SCALE GENOMIC DNA]</scope>
    <source>
        <strain>ATCC 15703 / DSM 20083 / NCTC 11814 / E194a</strain>
    </source>
</reference>
<proteinExistence type="inferred from homology"/>
<organism>
    <name type="scientific">Bifidobacterium adolescentis (strain ATCC 15703 / DSM 20083 / NCTC 11814 / E194a)</name>
    <dbReference type="NCBI Taxonomy" id="367928"/>
    <lineage>
        <taxon>Bacteria</taxon>
        <taxon>Bacillati</taxon>
        <taxon>Actinomycetota</taxon>
        <taxon>Actinomycetes</taxon>
        <taxon>Bifidobacteriales</taxon>
        <taxon>Bifidobacteriaceae</taxon>
        <taxon>Bifidobacterium</taxon>
    </lineage>
</organism>
<gene>
    <name evidence="1" type="primary">metK</name>
    <name type="ordered locus">BAD_0541</name>
</gene>
<evidence type="ECO:0000255" key="1">
    <source>
        <dbReference type="HAMAP-Rule" id="MF_00086"/>
    </source>
</evidence>
<feature type="chain" id="PRO_0000302896" description="S-adenosylmethionine synthase">
    <location>
        <begin position="1"/>
        <end position="404"/>
    </location>
</feature>
<feature type="region of interest" description="Flexible loop" evidence="1">
    <location>
        <begin position="100"/>
        <end position="110"/>
    </location>
</feature>
<feature type="binding site" description="in other chain" evidence="1">
    <location>
        <position position="16"/>
    </location>
    <ligand>
        <name>ATP</name>
        <dbReference type="ChEBI" id="CHEBI:30616"/>
        <note>ligand shared between two neighboring subunits</note>
    </ligand>
</feature>
<feature type="binding site" evidence="1">
    <location>
        <position position="18"/>
    </location>
    <ligand>
        <name>Mg(2+)</name>
        <dbReference type="ChEBI" id="CHEBI:18420"/>
    </ligand>
</feature>
<feature type="binding site" evidence="1">
    <location>
        <position position="44"/>
    </location>
    <ligand>
        <name>K(+)</name>
        <dbReference type="ChEBI" id="CHEBI:29103"/>
    </ligand>
</feature>
<feature type="binding site" description="in other chain" evidence="1">
    <location>
        <position position="57"/>
    </location>
    <ligand>
        <name>L-methionine</name>
        <dbReference type="ChEBI" id="CHEBI:57844"/>
        <note>ligand shared between two neighboring subunits</note>
    </ligand>
</feature>
<feature type="binding site" description="in other chain" evidence="1">
    <location>
        <position position="100"/>
    </location>
    <ligand>
        <name>L-methionine</name>
        <dbReference type="ChEBI" id="CHEBI:57844"/>
        <note>ligand shared between two neighboring subunits</note>
    </ligand>
</feature>
<feature type="binding site" description="in other chain" evidence="1">
    <location>
        <begin position="177"/>
        <end position="179"/>
    </location>
    <ligand>
        <name>ATP</name>
        <dbReference type="ChEBI" id="CHEBI:30616"/>
        <note>ligand shared between two neighboring subunits</note>
    </ligand>
</feature>
<feature type="binding site" evidence="1">
    <location>
        <position position="257"/>
    </location>
    <ligand>
        <name>ATP</name>
        <dbReference type="ChEBI" id="CHEBI:30616"/>
        <note>ligand shared between two neighboring subunits</note>
    </ligand>
</feature>
<feature type="binding site" evidence="1">
    <location>
        <position position="257"/>
    </location>
    <ligand>
        <name>L-methionine</name>
        <dbReference type="ChEBI" id="CHEBI:57844"/>
        <note>ligand shared between two neighboring subunits</note>
    </ligand>
</feature>
<feature type="binding site" description="in other chain" evidence="1">
    <location>
        <begin position="263"/>
        <end position="264"/>
    </location>
    <ligand>
        <name>ATP</name>
        <dbReference type="ChEBI" id="CHEBI:30616"/>
        <note>ligand shared between two neighboring subunits</note>
    </ligand>
</feature>
<feature type="binding site" evidence="1">
    <location>
        <position position="280"/>
    </location>
    <ligand>
        <name>ATP</name>
        <dbReference type="ChEBI" id="CHEBI:30616"/>
        <note>ligand shared between two neighboring subunits</note>
    </ligand>
</feature>
<feature type="binding site" evidence="1">
    <location>
        <position position="284"/>
    </location>
    <ligand>
        <name>ATP</name>
        <dbReference type="ChEBI" id="CHEBI:30616"/>
        <note>ligand shared between two neighboring subunits</note>
    </ligand>
</feature>
<feature type="binding site" description="in other chain" evidence="1">
    <location>
        <position position="288"/>
    </location>
    <ligand>
        <name>L-methionine</name>
        <dbReference type="ChEBI" id="CHEBI:57844"/>
        <note>ligand shared between two neighboring subunits</note>
    </ligand>
</feature>
<sequence>MAELKLISAESVTEGHPDKVCDQISDAILDDMLAQDPHSHVAVETCATVGQFFVFGEVTSEGYSDIQNIVRSVVRNIGYTSSRVGLDADSCGVTVSLTEQSPEINQGVARLSGEEESKASREQRYEAQGAGDQGVMFGYACDETDVLMPLPIHLAHRLAYRLAEVRKSGEVPHLRPDGKTQVTIEYDDDDHPVRLDTVLVSTQHDPEVDQAWLKEQLTEHVIRPVLDDVLADRVAHDEYRVLVNPTGSFILGGPAADAGLTGRKIIVDTYGGAAHHGGGAFSGKDPSKVDRSAAYAARWVAKNIVAAGLAHKVEVQVAYAIGVADPVSINVETYGTEIGVTREQIQQAVRKVFDLRPAAIIDELDLKRPIYSKTAAYGHFGREDADFTWEATNKVDELKEAIKA</sequence>
<name>METK_BIFAA</name>
<dbReference type="EC" id="2.5.1.6" evidence="1"/>
<dbReference type="EMBL" id="AP009256">
    <property type="protein sequence ID" value="BAF39322.1"/>
    <property type="molecule type" value="Genomic_DNA"/>
</dbReference>
<dbReference type="RefSeq" id="WP_011742983.1">
    <property type="nucleotide sequence ID" value="NZ_CAXVKE010000001.1"/>
</dbReference>
<dbReference type="SMR" id="A1A0T9"/>
<dbReference type="STRING" id="367928.BAD_0541"/>
<dbReference type="PaxDb" id="1680-BADO_0554"/>
<dbReference type="GeneID" id="4556411"/>
<dbReference type="KEGG" id="bad:BAD_0541"/>
<dbReference type="HOGENOM" id="CLU_041802_1_1_11"/>
<dbReference type="UniPathway" id="UPA00315">
    <property type="reaction ID" value="UER00080"/>
</dbReference>
<dbReference type="Proteomes" id="UP000008702">
    <property type="component" value="Chromosome"/>
</dbReference>
<dbReference type="GO" id="GO:0005737">
    <property type="term" value="C:cytoplasm"/>
    <property type="evidence" value="ECO:0007669"/>
    <property type="project" value="UniProtKB-SubCell"/>
</dbReference>
<dbReference type="GO" id="GO:0005524">
    <property type="term" value="F:ATP binding"/>
    <property type="evidence" value="ECO:0007669"/>
    <property type="project" value="UniProtKB-UniRule"/>
</dbReference>
<dbReference type="GO" id="GO:0000287">
    <property type="term" value="F:magnesium ion binding"/>
    <property type="evidence" value="ECO:0007669"/>
    <property type="project" value="UniProtKB-UniRule"/>
</dbReference>
<dbReference type="GO" id="GO:0004478">
    <property type="term" value="F:methionine adenosyltransferase activity"/>
    <property type="evidence" value="ECO:0007669"/>
    <property type="project" value="UniProtKB-UniRule"/>
</dbReference>
<dbReference type="GO" id="GO:0006730">
    <property type="term" value="P:one-carbon metabolic process"/>
    <property type="evidence" value="ECO:0007669"/>
    <property type="project" value="UniProtKB-KW"/>
</dbReference>
<dbReference type="GO" id="GO:0006556">
    <property type="term" value="P:S-adenosylmethionine biosynthetic process"/>
    <property type="evidence" value="ECO:0007669"/>
    <property type="project" value="UniProtKB-UniRule"/>
</dbReference>
<dbReference type="CDD" id="cd18079">
    <property type="entry name" value="S-AdoMet_synt"/>
    <property type="match status" value="1"/>
</dbReference>
<dbReference type="FunFam" id="3.30.300.10:FF:000003">
    <property type="entry name" value="S-adenosylmethionine synthase"/>
    <property type="match status" value="1"/>
</dbReference>
<dbReference type="FunFam" id="3.30.300.10:FF:000004">
    <property type="entry name" value="S-adenosylmethionine synthase"/>
    <property type="match status" value="1"/>
</dbReference>
<dbReference type="Gene3D" id="3.30.300.10">
    <property type="match status" value="3"/>
</dbReference>
<dbReference type="HAMAP" id="MF_00086">
    <property type="entry name" value="S_AdoMet_synth1"/>
    <property type="match status" value="1"/>
</dbReference>
<dbReference type="InterPro" id="IPR022631">
    <property type="entry name" value="ADOMET_SYNTHASE_CS"/>
</dbReference>
<dbReference type="InterPro" id="IPR022630">
    <property type="entry name" value="S-AdoMet_synt_C"/>
</dbReference>
<dbReference type="InterPro" id="IPR022629">
    <property type="entry name" value="S-AdoMet_synt_central"/>
</dbReference>
<dbReference type="InterPro" id="IPR022628">
    <property type="entry name" value="S-AdoMet_synt_N"/>
</dbReference>
<dbReference type="InterPro" id="IPR002133">
    <property type="entry name" value="S-AdoMet_synthetase"/>
</dbReference>
<dbReference type="InterPro" id="IPR022636">
    <property type="entry name" value="S-AdoMet_synthetase_sfam"/>
</dbReference>
<dbReference type="NCBIfam" id="TIGR01034">
    <property type="entry name" value="metK"/>
    <property type="match status" value="1"/>
</dbReference>
<dbReference type="PANTHER" id="PTHR11964">
    <property type="entry name" value="S-ADENOSYLMETHIONINE SYNTHETASE"/>
    <property type="match status" value="1"/>
</dbReference>
<dbReference type="Pfam" id="PF02773">
    <property type="entry name" value="S-AdoMet_synt_C"/>
    <property type="match status" value="1"/>
</dbReference>
<dbReference type="Pfam" id="PF02772">
    <property type="entry name" value="S-AdoMet_synt_M"/>
    <property type="match status" value="1"/>
</dbReference>
<dbReference type="Pfam" id="PF00438">
    <property type="entry name" value="S-AdoMet_synt_N"/>
    <property type="match status" value="1"/>
</dbReference>
<dbReference type="PIRSF" id="PIRSF000497">
    <property type="entry name" value="MAT"/>
    <property type="match status" value="1"/>
</dbReference>
<dbReference type="SUPFAM" id="SSF55973">
    <property type="entry name" value="S-adenosylmethionine synthetase"/>
    <property type="match status" value="3"/>
</dbReference>
<dbReference type="PROSITE" id="PS00376">
    <property type="entry name" value="ADOMET_SYNTHASE_1"/>
    <property type="match status" value="1"/>
</dbReference>
<dbReference type="PROSITE" id="PS00377">
    <property type="entry name" value="ADOMET_SYNTHASE_2"/>
    <property type="match status" value="1"/>
</dbReference>